<organism>
    <name type="scientific">Treponema succinifaciens (strain ATCC 33096 / DSM 2489 / 6091)</name>
    <dbReference type="NCBI Taxonomy" id="869209"/>
    <lineage>
        <taxon>Bacteria</taxon>
        <taxon>Pseudomonadati</taxon>
        <taxon>Spirochaetota</taxon>
        <taxon>Spirochaetia</taxon>
        <taxon>Spirochaetales</taxon>
        <taxon>Treponemataceae</taxon>
        <taxon>Treponema</taxon>
    </lineage>
</organism>
<proteinExistence type="inferred from homology"/>
<keyword id="KW-0963">Cytoplasm</keyword>
<keyword id="KW-0255">Endonuclease</keyword>
<keyword id="KW-0378">Hydrolase</keyword>
<keyword id="KW-0460">Magnesium</keyword>
<keyword id="KW-0479">Metal-binding</keyword>
<keyword id="KW-0507">mRNA processing</keyword>
<keyword id="KW-0540">Nuclease</keyword>
<keyword id="KW-1185">Reference proteome</keyword>
<keyword id="KW-0694">RNA-binding</keyword>
<keyword id="KW-0698">rRNA processing</keyword>
<keyword id="KW-0699">rRNA-binding</keyword>
<keyword id="KW-0819">tRNA processing</keyword>
<feature type="chain" id="PRO_0000416614" description="Ribonuclease 3">
    <location>
        <begin position="1"/>
        <end position="369"/>
    </location>
</feature>
<feature type="domain" description="RNase III">
    <location>
        <begin position="6"/>
        <end position="142"/>
    </location>
</feature>
<feature type="domain" description="DRBM">
    <location>
        <begin position="272"/>
        <end position="341"/>
    </location>
</feature>
<feature type="active site" evidence="2">
    <location>
        <position position="50"/>
    </location>
</feature>
<feature type="active site" evidence="1">
    <location>
        <position position="131"/>
    </location>
</feature>
<feature type="binding site" evidence="1">
    <location>
        <position position="46"/>
    </location>
    <ligand>
        <name>Mg(2+)</name>
        <dbReference type="ChEBI" id="CHEBI:18420"/>
    </ligand>
</feature>
<feature type="binding site" evidence="1">
    <location>
        <position position="128"/>
    </location>
    <ligand>
        <name>Mg(2+)</name>
        <dbReference type="ChEBI" id="CHEBI:18420"/>
    </ligand>
</feature>
<feature type="binding site" evidence="1">
    <location>
        <position position="131"/>
    </location>
    <ligand>
        <name>Mg(2+)</name>
        <dbReference type="ChEBI" id="CHEBI:18420"/>
    </ligand>
</feature>
<comment type="function">
    <text evidence="1">Digests double-stranded RNA. Involved in the processing of primary rRNA transcript to yield the immediate precursors to the large and small rRNAs (23S and 16S). Processes some mRNAs, and tRNAs when they are encoded in the rRNA operon. Processes pre-crRNA and tracrRNA of type II CRISPR loci if present in the organism (By similarity).</text>
</comment>
<comment type="catalytic activity">
    <reaction>
        <text>Endonucleolytic cleavage to 5'-phosphomonoester.</text>
        <dbReference type="EC" id="3.1.26.3"/>
    </reaction>
</comment>
<comment type="cofactor">
    <cofactor evidence="1">
        <name>Mg(2+)</name>
        <dbReference type="ChEBI" id="CHEBI:18420"/>
    </cofactor>
</comment>
<comment type="subunit">
    <text evidence="1">Homodimer.</text>
</comment>
<comment type="subcellular location">
    <subcellularLocation>
        <location evidence="1">Cytoplasm</location>
    </subcellularLocation>
</comment>
<comment type="similarity">
    <text evidence="3">Belongs to the ribonuclease III family.</text>
</comment>
<gene>
    <name type="primary">rnc</name>
    <name type="ordered locus">Tresu_0151</name>
</gene>
<evidence type="ECO:0000250" key="1"/>
<evidence type="ECO:0000255" key="2"/>
<evidence type="ECO:0000305" key="3"/>
<reference key="1">
    <citation type="submission" date="2011-04" db="EMBL/GenBank/DDBJ databases">
        <title>The complete genome of chromosome of Treponema succinifaciens DSM 2489.</title>
        <authorList>
            <person name="Lucas S."/>
            <person name="Copeland A."/>
            <person name="Lapidus A."/>
            <person name="Bruce D."/>
            <person name="Goodwin L."/>
            <person name="Pitluck S."/>
            <person name="Peters L."/>
            <person name="Kyrpides N."/>
            <person name="Mavromatis K."/>
            <person name="Ivanova N."/>
            <person name="Ovchinnikova G."/>
            <person name="Teshima H."/>
            <person name="Detter J.C."/>
            <person name="Tapia R."/>
            <person name="Han C."/>
            <person name="Land M."/>
            <person name="Hauser L."/>
            <person name="Markowitz V."/>
            <person name="Cheng J.-F."/>
            <person name="Hugenholtz P."/>
            <person name="Woyke T."/>
            <person name="Wu D."/>
            <person name="Gronow S."/>
            <person name="Wellnitz S."/>
            <person name="Brambilla E."/>
            <person name="Klenk H.-P."/>
            <person name="Eisen J.A."/>
        </authorList>
    </citation>
    <scope>NUCLEOTIDE SEQUENCE [LARGE SCALE GENOMIC DNA]</scope>
    <source>
        <strain>ATCC 33096 / DSM 2489 / 6091</strain>
    </source>
</reference>
<protein>
    <recommendedName>
        <fullName>Ribonuclease 3</fullName>
        <ecNumber>3.1.26.3</ecNumber>
    </recommendedName>
    <alternativeName>
        <fullName>Ribonuclease III</fullName>
        <shortName>RNase III</shortName>
    </alternativeName>
</protein>
<name>RNC_TRES6</name>
<sequence length="369" mass="42826">MNRQDIGFVQSSINYQFKNLQLLEQAFTRKSYSEEHPELQNNEVLEFYGDEILDFFVTKMMYKRFSRILNNELVSEKNEGELTKLKSILVSKESLARCMYNIGFSKFLYLGKSDEKNEVYKSKSVNEDLFEAIIGAVAADCDWNYEKLEKVCRTMLDMETTNGYLALLVKEKSHRLGFGEPCYRPFAWQTDNPEDWQSDNLFNMGIGFGGFGSTSKNPKTGKHEYGIQVGENKFTGIGDGIAQAKLNAEQKAYHFLIQEEIKQQFQNLDYTNPASTLHELFQKKVIMEVRYEFNEYHDENGNPIWNCKAILEGYGTFEADNASKKQVKQDASLKLLKFIAKTKIEQTEKWEIPTFYHGMARIWHDEGKI</sequence>
<dbReference type="EC" id="3.1.26.3"/>
<dbReference type="EMBL" id="CP002631">
    <property type="protein sequence ID" value="AEB13117.1"/>
    <property type="molecule type" value="Genomic_DNA"/>
</dbReference>
<dbReference type="RefSeq" id="WP_013700428.1">
    <property type="nucleotide sequence ID" value="NC_015385.1"/>
</dbReference>
<dbReference type="SMR" id="F2NV13"/>
<dbReference type="STRING" id="869209.Tresu_0151"/>
<dbReference type="KEGG" id="tsu:Tresu_0151"/>
<dbReference type="eggNOG" id="COG0571">
    <property type="taxonomic scope" value="Bacteria"/>
</dbReference>
<dbReference type="HOGENOM" id="CLU_775860_0_0_12"/>
<dbReference type="OrthoDB" id="356412at2"/>
<dbReference type="Proteomes" id="UP000006852">
    <property type="component" value="Chromosome"/>
</dbReference>
<dbReference type="GO" id="GO:0005737">
    <property type="term" value="C:cytoplasm"/>
    <property type="evidence" value="ECO:0007669"/>
    <property type="project" value="UniProtKB-SubCell"/>
</dbReference>
<dbReference type="GO" id="GO:0046872">
    <property type="term" value="F:metal ion binding"/>
    <property type="evidence" value="ECO:0007669"/>
    <property type="project" value="UniProtKB-KW"/>
</dbReference>
<dbReference type="GO" id="GO:0004525">
    <property type="term" value="F:ribonuclease III activity"/>
    <property type="evidence" value="ECO:0007669"/>
    <property type="project" value="UniProtKB-UniRule"/>
</dbReference>
<dbReference type="GO" id="GO:0019843">
    <property type="term" value="F:rRNA binding"/>
    <property type="evidence" value="ECO:0007669"/>
    <property type="project" value="UniProtKB-KW"/>
</dbReference>
<dbReference type="GO" id="GO:0006397">
    <property type="term" value="P:mRNA processing"/>
    <property type="evidence" value="ECO:0007669"/>
    <property type="project" value="UniProtKB-UniRule"/>
</dbReference>
<dbReference type="GO" id="GO:0006364">
    <property type="term" value="P:rRNA processing"/>
    <property type="evidence" value="ECO:0007669"/>
    <property type="project" value="UniProtKB-UniRule"/>
</dbReference>
<dbReference type="GO" id="GO:0008033">
    <property type="term" value="P:tRNA processing"/>
    <property type="evidence" value="ECO:0007669"/>
    <property type="project" value="UniProtKB-KW"/>
</dbReference>
<dbReference type="CDD" id="cd00048">
    <property type="entry name" value="DSRM_SF"/>
    <property type="match status" value="1"/>
</dbReference>
<dbReference type="CDD" id="cd00593">
    <property type="entry name" value="RIBOc"/>
    <property type="match status" value="1"/>
</dbReference>
<dbReference type="Gene3D" id="3.30.160.20">
    <property type="match status" value="1"/>
</dbReference>
<dbReference type="Gene3D" id="1.10.1520.10">
    <property type="entry name" value="Ribonuclease III domain"/>
    <property type="match status" value="1"/>
</dbReference>
<dbReference type="HAMAP" id="MF_00104">
    <property type="entry name" value="RNase_III"/>
    <property type="match status" value="1"/>
</dbReference>
<dbReference type="InterPro" id="IPR014720">
    <property type="entry name" value="dsRBD_dom"/>
</dbReference>
<dbReference type="InterPro" id="IPR011907">
    <property type="entry name" value="RNase_III"/>
</dbReference>
<dbReference type="InterPro" id="IPR000999">
    <property type="entry name" value="RNase_III_dom"/>
</dbReference>
<dbReference type="InterPro" id="IPR036389">
    <property type="entry name" value="RNase_III_sf"/>
</dbReference>
<dbReference type="PANTHER" id="PTHR14950">
    <property type="entry name" value="DICER-RELATED"/>
    <property type="match status" value="1"/>
</dbReference>
<dbReference type="PANTHER" id="PTHR14950:SF37">
    <property type="entry name" value="ENDORIBONUCLEASE DICER"/>
    <property type="match status" value="1"/>
</dbReference>
<dbReference type="Pfam" id="PF00035">
    <property type="entry name" value="dsrm"/>
    <property type="match status" value="1"/>
</dbReference>
<dbReference type="Pfam" id="PF14622">
    <property type="entry name" value="Ribonucleas_3_3"/>
    <property type="match status" value="1"/>
</dbReference>
<dbReference type="SMART" id="SM00535">
    <property type="entry name" value="RIBOc"/>
    <property type="match status" value="1"/>
</dbReference>
<dbReference type="SUPFAM" id="SSF54768">
    <property type="entry name" value="dsRNA-binding domain-like"/>
    <property type="match status" value="1"/>
</dbReference>
<dbReference type="SUPFAM" id="SSF69065">
    <property type="entry name" value="RNase III domain-like"/>
    <property type="match status" value="1"/>
</dbReference>
<dbReference type="PROSITE" id="PS50137">
    <property type="entry name" value="DS_RBD"/>
    <property type="match status" value="1"/>
</dbReference>
<dbReference type="PROSITE" id="PS50142">
    <property type="entry name" value="RNASE_3_2"/>
    <property type="match status" value="1"/>
</dbReference>
<accession>F2NV13</accession>